<sequence length="165" mass="19116">MEMVFYPNDLLRVKTKQIENIDDKIRDYAKKMIELMDISGGVGLAAPQVGLDLALFVVRENKMARPLVFINPSIIETSYEFSSYKEGCLSIPGVYYDLMRPKAVVINFHDENGKSFTIENSDFLARIIQHEMDHLNGVLFIDYYEEKLKNKLLKPYMRERGLKAK</sequence>
<accession>O51092</accession>
<keyword id="KW-0378">Hydrolase</keyword>
<keyword id="KW-0408">Iron</keyword>
<keyword id="KW-0479">Metal-binding</keyword>
<keyword id="KW-0648">Protein biosynthesis</keyword>
<keyword id="KW-1185">Reference proteome</keyword>
<organism>
    <name type="scientific">Borreliella burgdorferi (strain ATCC 35210 / DSM 4680 / CIP 102532 / B31)</name>
    <name type="common">Borrelia burgdorferi</name>
    <dbReference type="NCBI Taxonomy" id="224326"/>
    <lineage>
        <taxon>Bacteria</taxon>
        <taxon>Pseudomonadati</taxon>
        <taxon>Spirochaetota</taxon>
        <taxon>Spirochaetia</taxon>
        <taxon>Spirochaetales</taxon>
        <taxon>Borreliaceae</taxon>
        <taxon>Borreliella</taxon>
    </lineage>
</organism>
<comment type="function">
    <text evidence="1">Removes the formyl group from the N-terminal Met of newly synthesized proteins. Requires at least a dipeptide for an efficient rate of reaction. N-terminal L-methionine is a prerequisite for activity but the enzyme has broad specificity at other positions.</text>
</comment>
<comment type="catalytic activity">
    <reaction evidence="1">
        <text>N-terminal N-formyl-L-methionyl-[peptide] + H2O = N-terminal L-methionyl-[peptide] + formate</text>
        <dbReference type="Rhea" id="RHEA:24420"/>
        <dbReference type="Rhea" id="RHEA-COMP:10639"/>
        <dbReference type="Rhea" id="RHEA-COMP:10640"/>
        <dbReference type="ChEBI" id="CHEBI:15377"/>
        <dbReference type="ChEBI" id="CHEBI:15740"/>
        <dbReference type="ChEBI" id="CHEBI:49298"/>
        <dbReference type="ChEBI" id="CHEBI:64731"/>
        <dbReference type="EC" id="3.5.1.88"/>
    </reaction>
</comment>
<comment type="cofactor">
    <cofactor evidence="1">
        <name>Fe(2+)</name>
        <dbReference type="ChEBI" id="CHEBI:29033"/>
    </cofactor>
    <text evidence="1">Binds 1 Fe(2+) ion.</text>
</comment>
<comment type="similarity">
    <text evidence="1">Belongs to the polypeptide deformylase family.</text>
</comment>
<feature type="chain" id="PRO_0000082746" description="Peptide deformylase">
    <location>
        <begin position="1"/>
        <end position="165"/>
    </location>
</feature>
<feature type="active site" evidence="1">
    <location>
        <position position="131"/>
    </location>
</feature>
<feature type="binding site" evidence="1">
    <location>
        <position position="88"/>
    </location>
    <ligand>
        <name>Fe cation</name>
        <dbReference type="ChEBI" id="CHEBI:24875"/>
    </ligand>
</feature>
<feature type="binding site" evidence="1">
    <location>
        <position position="130"/>
    </location>
    <ligand>
        <name>Fe cation</name>
        <dbReference type="ChEBI" id="CHEBI:24875"/>
    </ligand>
</feature>
<feature type="binding site" evidence="1">
    <location>
        <position position="134"/>
    </location>
    <ligand>
        <name>Fe cation</name>
        <dbReference type="ChEBI" id="CHEBI:24875"/>
    </ligand>
</feature>
<gene>
    <name evidence="1" type="primary">def</name>
    <name type="ordered locus">BB_0065</name>
</gene>
<protein>
    <recommendedName>
        <fullName evidence="1">Peptide deformylase</fullName>
        <shortName evidence="1">PDF</shortName>
        <ecNumber evidence="1">3.5.1.88</ecNumber>
    </recommendedName>
    <alternativeName>
        <fullName evidence="1">Polypeptide deformylase</fullName>
    </alternativeName>
</protein>
<evidence type="ECO:0000255" key="1">
    <source>
        <dbReference type="HAMAP-Rule" id="MF_00163"/>
    </source>
</evidence>
<name>DEF_BORBU</name>
<proteinExistence type="inferred from homology"/>
<reference key="1">
    <citation type="journal article" date="1997" name="Nature">
        <title>Genomic sequence of a Lyme disease spirochaete, Borrelia burgdorferi.</title>
        <authorList>
            <person name="Fraser C.M."/>
            <person name="Casjens S."/>
            <person name="Huang W.M."/>
            <person name="Sutton G.G."/>
            <person name="Clayton R.A."/>
            <person name="Lathigra R."/>
            <person name="White O."/>
            <person name="Ketchum K.A."/>
            <person name="Dodson R.J."/>
            <person name="Hickey E.K."/>
            <person name="Gwinn M.L."/>
            <person name="Dougherty B.A."/>
            <person name="Tomb J.-F."/>
            <person name="Fleischmann R.D."/>
            <person name="Richardson D.L."/>
            <person name="Peterson J.D."/>
            <person name="Kerlavage A.R."/>
            <person name="Quackenbush J."/>
            <person name="Salzberg S.L."/>
            <person name="Hanson M."/>
            <person name="van Vugt R."/>
            <person name="Palmer N."/>
            <person name="Adams M.D."/>
            <person name="Gocayne J.D."/>
            <person name="Weidman J.F."/>
            <person name="Utterback T.R."/>
            <person name="Watthey L."/>
            <person name="McDonald L.A."/>
            <person name="Artiach P."/>
            <person name="Bowman C."/>
            <person name="Garland S.A."/>
            <person name="Fujii C."/>
            <person name="Cotton M.D."/>
            <person name="Horst K."/>
            <person name="Roberts K.M."/>
            <person name="Hatch B."/>
            <person name="Smith H.O."/>
            <person name="Venter J.C."/>
        </authorList>
    </citation>
    <scope>NUCLEOTIDE SEQUENCE [LARGE SCALE GENOMIC DNA]</scope>
    <source>
        <strain>ATCC 35210 / DSM 4680 / CIP 102532 / B31</strain>
    </source>
</reference>
<dbReference type="EC" id="3.5.1.88" evidence="1"/>
<dbReference type="EMBL" id="AE000783">
    <property type="protein sequence ID" value="AAC66445.2"/>
    <property type="molecule type" value="Genomic_DNA"/>
</dbReference>
<dbReference type="PIR" id="A70108">
    <property type="entry name" value="A70108"/>
</dbReference>
<dbReference type="RefSeq" id="NP_212199.2">
    <property type="nucleotide sequence ID" value="NC_001318.1"/>
</dbReference>
<dbReference type="RefSeq" id="WP_002662034.1">
    <property type="nucleotide sequence ID" value="NC_001318.1"/>
</dbReference>
<dbReference type="SMR" id="O51092"/>
<dbReference type="STRING" id="224326.BB_0065"/>
<dbReference type="PaxDb" id="224326-BB_0065"/>
<dbReference type="EnsemblBacteria" id="AAC66445">
    <property type="protein sequence ID" value="AAC66445"/>
    <property type="gene ID" value="BB_0065"/>
</dbReference>
<dbReference type="KEGG" id="bbu:BB_0065"/>
<dbReference type="PATRIC" id="fig|224326.49.peg.463"/>
<dbReference type="HOGENOM" id="CLU_061901_4_2_12"/>
<dbReference type="OrthoDB" id="9784988at2"/>
<dbReference type="Proteomes" id="UP000001807">
    <property type="component" value="Chromosome"/>
</dbReference>
<dbReference type="GO" id="GO:0046872">
    <property type="term" value="F:metal ion binding"/>
    <property type="evidence" value="ECO:0007669"/>
    <property type="project" value="UniProtKB-KW"/>
</dbReference>
<dbReference type="GO" id="GO:0042586">
    <property type="term" value="F:peptide deformylase activity"/>
    <property type="evidence" value="ECO:0007669"/>
    <property type="project" value="UniProtKB-UniRule"/>
</dbReference>
<dbReference type="GO" id="GO:0043686">
    <property type="term" value="P:co-translational protein modification"/>
    <property type="evidence" value="ECO:0007669"/>
    <property type="project" value="TreeGrafter"/>
</dbReference>
<dbReference type="GO" id="GO:0006412">
    <property type="term" value="P:translation"/>
    <property type="evidence" value="ECO:0007669"/>
    <property type="project" value="UniProtKB-UniRule"/>
</dbReference>
<dbReference type="CDD" id="cd00487">
    <property type="entry name" value="Pep_deformylase"/>
    <property type="match status" value="1"/>
</dbReference>
<dbReference type="Gene3D" id="3.90.45.10">
    <property type="entry name" value="Peptide deformylase"/>
    <property type="match status" value="1"/>
</dbReference>
<dbReference type="HAMAP" id="MF_00163">
    <property type="entry name" value="Pep_deformylase"/>
    <property type="match status" value="1"/>
</dbReference>
<dbReference type="InterPro" id="IPR023635">
    <property type="entry name" value="Peptide_deformylase"/>
</dbReference>
<dbReference type="InterPro" id="IPR036821">
    <property type="entry name" value="Peptide_deformylase_sf"/>
</dbReference>
<dbReference type="NCBIfam" id="TIGR00079">
    <property type="entry name" value="pept_deformyl"/>
    <property type="match status" value="1"/>
</dbReference>
<dbReference type="NCBIfam" id="NF001159">
    <property type="entry name" value="PRK00150.1-3"/>
    <property type="match status" value="1"/>
</dbReference>
<dbReference type="PANTHER" id="PTHR10458">
    <property type="entry name" value="PEPTIDE DEFORMYLASE"/>
    <property type="match status" value="1"/>
</dbReference>
<dbReference type="PANTHER" id="PTHR10458:SF22">
    <property type="entry name" value="PEPTIDE DEFORMYLASE"/>
    <property type="match status" value="1"/>
</dbReference>
<dbReference type="Pfam" id="PF01327">
    <property type="entry name" value="Pep_deformylase"/>
    <property type="match status" value="1"/>
</dbReference>
<dbReference type="PIRSF" id="PIRSF004749">
    <property type="entry name" value="Pep_def"/>
    <property type="match status" value="1"/>
</dbReference>
<dbReference type="PRINTS" id="PR01576">
    <property type="entry name" value="PDEFORMYLASE"/>
</dbReference>
<dbReference type="SUPFAM" id="SSF56420">
    <property type="entry name" value="Peptide deformylase"/>
    <property type="match status" value="1"/>
</dbReference>